<gene>
    <name type="primary">P</name>
</gene>
<comment type="function">
    <text evidence="1">Nonenzymatic cofactor regulating the function and conformation of the RNA polymerase and part of the transcription and replication complex. Binds the viral ribonucleocapsid and positions the L polymerase on the template. Acts as a chaperone for newly synthesized free N protein, so-called N(0). Plays a role in virion assembly.</text>
</comment>
<comment type="subunit">
    <text evidence="1 3">Homodimer (By similarity). Interacts with the L polymerase; the association of P and L forms the polymerase complex and positions P optimally for encapsidation of newly synthesized genomes with the nucleoprotein. Interacts (via N-terminus) with N(0). Interacts (via C-terminus) with N in ribonucleocapsid (via C-terminus); this interaction allows to package the L polymerase in the virion and positions the polymerase on the template, since P acts as a bridge between N and L (By similarity).</text>
</comment>
<comment type="subcellular location">
    <subcellularLocation>
        <location evidence="1">Virion</location>
    </subcellularLocation>
    <subcellularLocation>
        <location evidence="1">Host cytoplasm</location>
    </subcellularLocation>
</comment>
<comment type="domain">
    <text evidence="1">The N-terminus is disordered and is involved in binding N(0). The region of interaction with the L polymerase is necessary for transcription. The hinge region is highly variable. The central domain is involved in oligomerization. The C-terminus is basic and essential for binding the N-RNA template.</text>
</comment>
<comment type="similarity">
    <text evidence="5">Belongs to the vesiculovirus protein P family.</text>
</comment>
<dbReference type="EMBL" id="AJ810084">
    <property type="protein sequence ID" value="CAH17545.1"/>
    <property type="molecule type" value="Genomic_RNA"/>
</dbReference>
<dbReference type="RefSeq" id="YP_007641383.1">
    <property type="nucleotide sequence ID" value="NC_020806.1"/>
</dbReference>
<dbReference type="SMR" id="Q5K2K6"/>
<dbReference type="GeneID" id="14857916"/>
<dbReference type="KEGG" id="vg:14857916"/>
<dbReference type="OrthoDB" id="24599at10239"/>
<dbReference type="Proteomes" id="UP000204017">
    <property type="component" value="Genome"/>
</dbReference>
<dbReference type="GO" id="GO:0030430">
    <property type="term" value="C:host cell cytoplasm"/>
    <property type="evidence" value="ECO:0007669"/>
    <property type="project" value="UniProtKB-SubCell"/>
</dbReference>
<dbReference type="GO" id="GO:0044423">
    <property type="term" value="C:virion component"/>
    <property type="evidence" value="ECO:0007669"/>
    <property type="project" value="UniProtKB-KW"/>
</dbReference>
<dbReference type="GO" id="GO:0003968">
    <property type="term" value="F:RNA-directed RNA polymerase activity"/>
    <property type="evidence" value="ECO:0007669"/>
    <property type="project" value="InterPro"/>
</dbReference>
<dbReference type="Gene3D" id="1.10.8.440">
    <property type="entry name" value="Vesicular stomatitis virus phosphoprotein C-terminal domain"/>
    <property type="match status" value="1"/>
</dbReference>
<dbReference type="InterPro" id="IPR043036">
    <property type="entry name" value="Phosphoprotein_C_viral"/>
</dbReference>
<dbReference type="InterPro" id="IPR037263">
    <property type="entry name" value="Phosphoprotein_central"/>
</dbReference>
<dbReference type="SUPFAM" id="SSF160892">
    <property type="entry name" value="Phosphoprotein oligomerization domain-like"/>
    <property type="match status" value="1"/>
</dbReference>
<evidence type="ECO:0000250" key="1">
    <source>
        <dbReference type="UniProtKB" id="P03520"/>
    </source>
</evidence>
<evidence type="ECO:0000250" key="2">
    <source>
        <dbReference type="UniProtKB" id="P04877"/>
    </source>
</evidence>
<evidence type="ECO:0000250" key="3">
    <source>
        <dbReference type="UniProtKB" id="P04880"/>
    </source>
</evidence>
<evidence type="ECO:0000256" key="4">
    <source>
        <dbReference type="SAM" id="MobiDB-lite"/>
    </source>
</evidence>
<evidence type="ECO:0000305" key="5"/>
<organismHost>
    <name type="scientific">Gerbillinae</name>
    <name type="common">gerbils</name>
    <dbReference type="NCBI Taxonomy" id="10045"/>
</organismHost>
<organismHost>
    <name type="scientific">Homo sapiens</name>
    <name type="common">Human</name>
    <dbReference type="NCBI Taxonomy" id="9606"/>
</organismHost>
<organismHost>
    <name type="scientific">Phlebotomus papatasi</name>
    <name type="common">Sandfly</name>
    <dbReference type="NCBI Taxonomy" id="29031"/>
</organismHost>
<organism>
    <name type="scientific">Isfahan virus</name>
    <name type="common">ISFV</name>
    <dbReference type="NCBI Taxonomy" id="290008"/>
    <lineage>
        <taxon>Viruses</taxon>
        <taxon>Riboviria</taxon>
        <taxon>Orthornavirae</taxon>
        <taxon>Negarnaviricota</taxon>
        <taxon>Haploviricotina</taxon>
        <taxon>Monjiviricetes</taxon>
        <taxon>Mononegavirales</taxon>
        <taxon>Rhabdoviridae</taxon>
        <taxon>Alpharhabdovirinae</taxon>
        <taxon>Vesiculovirus</taxon>
        <taxon>Vesiculovirus isfahan</taxon>
    </lineage>
</organism>
<keyword id="KW-0143">Chaperone</keyword>
<keyword id="KW-1035">Host cytoplasm</keyword>
<keyword id="KW-0597">Phosphoprotein</keyword>
<keyword id="KW-0693">Viral RNA replication</keyword>
<keyword id="KW-0946">Virion</keyword>
<accession>Q5K2K6</accession>
<proteinExistence type="inferred from homology"/>
<feature type="chain" id="PRO_0000292949" description="Phosphoprotein">
    <location>
        <begin position="1"/>
        <end position="289"/>
    </location>
</feature>
<feature type="region of interest" description="Disordered" evidence="4">
    <location>
        <begin position="170"/>
        <end position="211"/>
    </location>
</feature>
<feature type="compositionally biased region" description="Low complexity" evidence="4">
    <location>
        <begin position="182"/>
        <end position="204"/>
    </location>
</feature>
<feature type="site" description="Involved in oligomerization" evidence="3">
    <location>
        <position position="126"/>
    </location>
</feature>
<feature type="site" description="Interaction with the Nucleoprotein-RNA" evidence="2">
    <location>
        <position position="270"/>
    </location>
</feature>
<feature type="modified residue" description="Phosphotyrosine" evidence="1">
    <location>
        <position position="11"/>
    </location>
</feature>
<feature type="modified residue" description="Phosphoserine; by host" evidence="3">
    <location>
        <position position="246"/>
    </location>
</feature>
<reference key="1">
    <citation type="journal article" date="2005" name="Arch. Virol.">
        <title>Complete genome sequences of Chandipura and Isfahan vesiculoviruses.</title>
        <authorList>
            <person name="Marriott A.C."/>
        </authorList>
    </citation>
    <scope>NUCLEOTIDE SEQUENCE [GENOMIC RNA]</scope>
</reference>
<name>PHOSP_ISFV</name>
<protein>
    <recommendedName>
        <fullName>Phosphoprotein</fullName>
        <shortName>Protein P</shortName>
    </recommendedName>
    <alternativeName>
        <fullName>Protein M1</fullName>
    </alternativeName>
</protein>
<sequence length="289" mass="32250">MSRLNQILKDYPLLEATTSEIESMESSLADDVITSNDDEIQSVSPQYYLRDMFKASITEGPDDDFPPVPEVENDIILDDDEEYDGYKVDFAEARPWTALTQKNIDGRMNLELMAPENLTDAQYKQWVESVSSIMTISRQIRLHQAEIMDTSSGLLIIENMIPSIGRTSEFKSIPEHIPPSPTSDHTTPPSSLRSDTPSQTSSSSMGLPDVSSASDWSGMINKKIRIPPVVSSKSPYEFTLSDLYGSNQAALDYLSGSGMDLRTAVCSGLKQRGIYNRIRIQYKITPEFV</sequence>